<evidence type="ECO:0000250" key="1"/>
<evidence type="ECO:0000255" key="2">
    <source>
        <dbReference type="HAMAP-Rule" id="MF_00118"/>
    </source>
</evidence>
<dbReference type="EC" id="3.6.5.3" evidence="2"/>
<dbReference type="EMBL" id="CR626927">
    <property type="protein sequence ID" value="CAH09698.1"/>
    <property type="molecule type" value="Genomic_DNA"/>
</dbReference>
<dbReference type="RefSeq" id="WP_005782155.1">
    <property type="nucleotide sequence ID" value="NZ_UFTH01000001.1"/>
</dbReference>
<dbReference type="SMR" id="Q5L890"/>
<dbReference type="PaxDb" id="272559-BF9343_3917"/>
<dbReference type="GeneID" id="93105343"/>
<dbReference type="KEGG" id="bfs:BF9343_3917"/>
<dbReference type="eggNOG" id="COG0050">
    <property type="taxonomic scope" value="Bacteria"/>
</dbReference>
<dbReference type="HOGENOM" id="CLU_007265_0_0_10"/>
<dbReference type="Proteomes" id="UP000006731">
    <property type="component" value="Chromosome"/>
</dbReference>
<dbReference type="GO" id="GO:0005829">
    <property type="term" value="C:cytosol"/>
    <property type="evidence" value="ECO:0007669"/>
    <property type="project" value="TreeGrafter"/>
</dbReference>
<dbReference type="GO" id="GO:0005525">
    <property type="term" value="F:GTP binding"/>
    <property type="evidence" value="ECO:0007669"/>
    <property type="project" value="UniProtKB-UniRule"/>
</dbReference>
<dbReference type="GO" id="GO:0003924">
    <property type="term" value="F:GTPase activity"/>
    <property type="evidence" value="ECO:0007669"/>
    <property type="project" value="InterPro"/>
</dbReference>
<dbReference type="GO" id="GO:0003746">
    <property type="term" value="F:translation elongation factor activity"/>
    <property type="evidence" value="ECO:0007669"/>
    <property type="project" value="UniProtKB-UniRule"/>
</dbReference>
<dbReference type="CDD" id="cd01884">
    <property type="entry name" value="EF_Tu"/>
    <property type="match status" value="1"/>
</dbReference>
<dbReference type="CDD" id="cd03697">
    <property type="entry name" value="EFTU_II"/>
    <property type="match status" value="1"/>
</dbReference>
<dbReference type="CDD" id="cd03707">
    <property type="entry name" value="EFTU_III"/>
    <property type="match status" value="1"/>
</dbReference>
<dbReference type="FunFam" id="2.40.30.10:FF:000002">
    <property type="entry name" value="Elongation factor Tu"/>
    <property type="match status" value="1"/>
</dbReference>
<dbReference type="FunFam" id="3.40.50.300:FF:000003">
    <property type="entry name" value="Elongation factor Tu"/>
    <property type="match status" value="1"/>
</dbReference>
<dbReference type="FunFam" id="2.40.30.10:FF:000020">
    <property type="entry name" value="Translation elongation factor EF-1"/>
    <property type="match status" value="1"/>
</dbReference>
<dbReference type="Gene3D" id="3.40.50.300">
    <property type="entry name" value="P-loop containing nucleotide triphosphate hydrolases"/>
    <property type="match status" value="1"/>
</dbReference>
<dbReference type="Gene3D" id="2.40.30.10">
    <property type="entry name" value="Translation factors"/>
    <property type="match status" value="2"/>
</dbReference>
<dbReference type="HAMAP" id="MF_00118_B">
    <property type="entry name" value="EF_Tu_B"/>
    <property type="match status" value="1"/>
</dbReference>
<dbReference type="InterPro" id="IPR041709">
    <property type="entry name" value="EF-Tu_GTP-bd"/>
</dbReference>
<dbReference type="InterPro" id="IPR050055">
    <property type="entry name" value="EF-Tu_GTPase"/>
</dbReference>
<dbReference type="InterPro" id="IPR004161">
    <property type="entry name" value="EFTu-like_2"/>
</dbReference>
<dbReference type="InterPro" id="IPR033720">
    <property type="entry name" value="EFTU_2"/>
</dbReference>
<dbReference type="InterPro" id="IPR031157">
    <property type="entry name" value="G_TR_CS"/>
</dbReference>
<dbReference type="InterPro" id="IPR027417">
    <property type="entry name" value="P-loop_NTPase"/>
</dbReference>
<dbReference type="InterPro" id="IPR005225">
    <property type="entry name" value="Small_GTP-bd"/>
</dbReference>
<dbReference type="InterPro" id="IPR000795">
    <property type="entry name" value="T_Tr_GTP-bd_dom"/>
</dbReference>
<dbReference type="InterPro" id="IPR009000">
    <property type="entry name" value="Transl_B-barrel_sf"/>
</dbReference>
<dbReference type="InterPro" id="IPR009001">
    <property type="entry name" value="Transl_elong_EF1A/Init_IF2_C"/>
</dbReference>
<dbReference type="InterPro" id="IPR004541">
    <property type="entry name" value="Transl_elong_EFTu/EF1A_bac/org"/>
</dbReference>
<dbReference type="InterPro" id="IPR004160">
    <property type="entry name" value="Transl_elong_EFTu/EF1A_C"/>
</dbReference>
<dbReference type="NCBIfam" id="TIGR00485">
    <property type="entry name" value="EF-Tu"/>
    <property type="match status" value="1"/>
</dbReference>
<dbReference type="NCBIfam" id="NF000766">
    <property type="entry name" value="PRK00049.1"/>
    <property type="match status" value="1"/>
</dbReference>
<dbReference type="NCBIfam" id="NF009372">
    <property type="entry name" value="PRK12735.1"/>
    <property type="match status" value="1"/>
</dbReference>
<dbReference type="NCBIfam" id="NF009373">
    <property type="entry name" value="PRK12736.1"/>
    <property type="match status" value="1"/>
</dbReference>
<dbReference type="NCBIfam" id="TIGR00231">
    <property type="entry name" value="small_GTP"/>
    <property type="match status" value="1"/>
</dbReference>
<dbReference type="PANTHER" id="PTHR43721:SF22">
    <property type="entry name" value="ELONGATION FACTOR TU, MITOCHONDRIAL"/>
    <property type="match status" value="1"/>
</dbReference>
<dbReference type="PANTHER" id="PTHR43721">
    <property type="entry name" value="ELONGATION FACTOR TU-RELATED"/>
    <property type="match status" value="1"/>
</dbReference>
<dbReference type="Pfam" id="PF00009">
    <property type="entry name" value="GTP_EFTU"/>
    <property type="match status" value="1"/>
</dbReference>
<dbReference type="Pfam" id="PF03144">
    <property type="entry name" value="GTP_EFTU_D2"/>
    <property type="match status" value="1"/>
</dbReference>
<dbReference type="Pfam" id="PF03143">
    <property type="entry name" value="GTP_EFTU_D3"/>
    <property type="match status" value="1"/>
</dbReference>
<dbReference type="PRINTS" id="PR00315">
    <property type="entry name" value="ELONGATNFCT"/>
</dbReference>
<dbReference type="SUPFAM" id="SSF50465">
    <property type="entry name" value="EF-Tu/eEF-1alpha/eIF2-gamma C-terminal domain"/>
    <property type="match status" value="1"/>
</dbReference>
<dbReference type="SUPFAM" id="SSF52540">
    <property type="entry name" value="P-loop containing nucleoside triphosphate hydrolases"/>
    <property type="match status" value="1"/>
</dbReference>
<dbReference type="SUPFAM" id="SSF50447">
    <property type="entry name" value="Translation proteins"/>
    <property type="match status" value="1"/>
</dbReference>
<dbReference type="PROSITE" id="PS00301">
    <property type="entry name" value="G_TR_1"/>
    <property type="match status" value="1"/>
</dbReference>
<dbReference type="PROSITE" id="PS51722">
    <property type="entry name" value="G_TR_2"/>
    <property type="match status" value="1"/>
</dbReference>
<gene>
    <name evidence="2" type="primary">tuf</name>
    <name type="ordered locus">BF4022</name>
</gene>
<proteinExistence type="inferred from homology"/>
<comment type="function">
    <text evidence="2">GTP hydrolase that promotes the GTP-dependent binding of aminoacyl-tRNA to the A-site of ribosomes during protein biosynthesis.</text>
</comment>
<comment type="catalytic activity">
    <reaction evidence="2">
        <text>GTP + H2O = GDP + phosphate + H(+)</text>
        <dbReference type="Rhea" id="RHEA:19669"/>
        <dbReference type="ChEBI" id="CHEBI:15377"/>
        <dbReference type="ChEBI" id="CHEBI:15378"/>
        <dbReference type="ChEBI" id="CHEBI:37565"/>
        <dbReference type="ChEBI" id="CHEBI:43474"/>
        <dbReference type="ChEBI" id="CHEBI:58189"/>
        <dbReference type="EC" id="3.6.5.3"/>
    </reaction>
    <physiologicalReaction direction="left-to-right" evidence="2">
        <dbReference type="Rhea" id="RHEA:19670"/>
    </physiologicalReaction>
</comment>
<comment type="subunit">
    <text evidence="2">Monomer.</text>
</comment>
<comment type="subcellular location">
    <subcellularLocation>
        <location evidence="2">Cytoplasm</location>
    </subcellularLocation>
</comment>
<comment type="similarity">
    <text evidence="2">Belongs to the TRAFAC class translation factor GTPase superfamily. Classic translation factor GTPase family. EF-Tu/EF-1A subfamily.</text>
</comment>
<protein>
    <recommendedName>
        <fullName evidence="2">Elongation factor Tu</fullName>
        <shortName evidence="2">EF-Tu</shortName>
        <ecNumber evidence="2">3.6.5.3</ecNumber>
    </recommendedName>
</protein>
<organism>
    <name type="scientific">Bacteroides fragilis (strain ATCC 25285 / DSM 2151 / CCUG 4856 / JCM 11019 / LMG 10263 / NCTC 9343 / Onslow / VPI 2553 / EN-2)</name>
    <dbReference type="NCBI Taxonomy" id="272559"/>
    <lineage>
        <taxon>Bacteria</taxon>
        <taxon>Pseudomonadati</taxon>
        <taxon>Bacteroidota</taxon>
        <taxon>Bacteroidia</taxon>
        <taxon>Bacteroidales</taxon>
        <taxon>Bacteroidaceae</taxon>
        <taxon>Bacteroides</taxon>
    </lineage>
</organism>
<keyword id="KW-0963">Cytoplasm</keyword>
<keyword id="KW-0251">Elongation factor</keyword>
<keyword id="KW-0342">GTP-binding</keyword>
<keyword id="KW-0378">Hydrolase</keyword>
<keyword id="KW-0460">Magnesium</keyword>
<keyword id="KW-0479">Metal-binding</keyword>
<keyword id="KW-0547">Nucleotide-binding</keyword>
<keyword id="KW-0648">Protein biosynthesis</keyword>
<reference key="1">
    <citation type="journal article" date="2005" name="Science">
        <title>Extensive DNA inversions in the B. fragilis genome control variable gene expression.</title>
        <authorList>
            <person name="Cerdeno-Tarraga A.-M."/>
            <person name="Patrick S."/>
            <person name="Crossman L.C."/>
            <person name="Blakely G."/>
            <person name="Abratt V."/>
            <person name="Lennard N."/>
            <person name="Poxton I."/>
            <person name="Duerden B."/>
            <person name="Harris B."/>
            <person name="Quail M.A."/>
            <person name="Barron A."/>
            <person name="Clark L."/>
            <person name="Corton C."/>
            <person name="Doggett J."/>
            <person name="Holden M.T.G."/>
            <person name="Larke N."/>
            <person name="Line A."/>
            <person name="Lord A."/>
            <person name="Norbertczak H."/>
            <person name="Ormond D."/>
            <person name="Price C."/>
            <person name="Rabbinowitsch E."/>
            <person name="Woodward J."/>
            <person name="Barrell B.G."/>
            <person name="Parkhill J."/>
        </authorList>
    </citation>
    <scope>NUCLEOTIDE SEQUENCE [LARGE SCALE GENOMIC DNA]</scope>
    <source>
        <strain>ATCC 25285 / DSM 2151 / CCUG 4856 / JCM 11019 / LMG 10263 / NCTC 9343 / Onslow / VPI 2553 / EN-2</strain>
    </source>
</reference>
<feature type="chain" id="PRO_1000015607" description="Elongation factor Tu">
    <location>
        <begin position="1"/>
        <end position="394"/>
    </location>
</feature>
<feature type="domain" description="tr-type G">
    <location>
        <begin position="10"/>
        <end position="205"/>
    </location>
</feature>
<feature type="region of interest" description="G1" evidence="1">
    <location>
        <begin position="19"/>
        <end position="26"/>
    </location>
</feature>
<feature type="region of interest" description="G2" evidence="1">
    <location>
        <begin position="60"/>
        <end position="64"/>
    </location>
</feature>
<feature type="region of interest" description="G3" evidence="1">
    <location>
        <begin position="81"/>
        <end position="84"/>
    </location>
</feature>
<feature type="region of interest" description="G4" evidence="1">
    <location>
        <begin position="136"/>
        <end position="139"/>
    </location>
</feature>
<feature type="region of interest" description="G5" evidence="1">
    <location>
        <begin position="174"/>
        <end position="176"/>
    </location>
</feature>
<feature type="binding site" evidence="2">
    <location>
        <begin position="19"/>
        <end position="26"/>
    </location>
    <ligand>
        <name>GTP</name>
        <dbReference type="ChEBI" id="CHEBI:37565"/>
    </ligand>
</feature>
<feature type="binding site" evidence="2">
    <location>
        <position position="26"/>
    </location>
    <ligand>
        <name>Mg(2+)</name>
        <dbReference type="ChEBI" id="CHEBI:18420"/>
    </ligand>
</feature>
<feature type="binding site" evidence="2">
    <location>
        <begin position="81"/>
        <end position="85"/>
    </location>
    <ligand>
        <name>GTP</name>
        <dbReference type="ChEBI" id="CHEBI:37565"/>
    </ligand>
</feature>
<feature type="binding site" evidence="2">
    <location>
        <begin position="136"/>
        <end position="139"/>
    </location>
    <ligand>
        <name>GTP</name>
        <dbReference type="ChEBI" id="CHEBI:37565"/>
    </ligand>
</feature>
<sequence>MAKEKFERTKPHVNIGTIGHVDHGKTTLTAAITTVLAKKGLSELRSFDSIDNAPEEKERGITINTSHVEYETANRHYAHVDCPGHADYVKNMVTGAAQMDGAIIVVAATDGPMPQTREHILLARQVNVPKLVVFMNKCDMVEDAEMLELVEMEMRELLSFYDFDGDNTPIIQGSALGALNGVEKWEDKVMELMEAVDTWIPLPPRDVDKPFLMPVEDVFSITGRGTVATGRIETGVIHVGDEIEILGLGEDKKSVVTGVEMFRKLLDQGEAGDNVGLLLRGVDKNEIKRGMVLCKPGQIKPHSKFKAEVYILKKEEGGRHTPFHNKYRPQFYLRTMDCTGEITLPEGTEMVMPGDNVTITVELIYPVALNIGLRFAIREGGRTVGAGQITEIID</sequence>
<name>EFTU_BACFN</name>
<accession>Q5L890</accession>